<proteinExistence type="inferred from homology"/>
<organism>
    <name type="scientific">Helicobacter pylori (strain P12)</name>
    <dbReference type="NCBI Taxonomy" id="570508"/>
    <lineage>
        <taxon>Bacteria</taxon>
        <taxon>Pseudomonadati</taxon>
        <taxon>Campylobacterota</taxon>
        <taxon>Epsilonproteobacteria</taxon>
        <taxon>Campylobacterales</taxon>
        <taxon>Helicobacteraceae</taxon>
        <taxon>Helicobacter</taxon>
    </lineage>
</organism>
<name>HSLV_HELP2</name>
<keyword id="KW-0021">Allosteric enzyme</keyword>
<keyword id="KW-0963">Cytoplasm</keyword>
<keyword id="KW-0378">Hydrolase</keyword>
<keyword id="KW-0479">Metal-binding</keyword>
<keyword id="KW-0645">Protease</keyword>
<keyword id="KW-0915">Sodium</keyword>
<keyword id="KW-0346">Stress response</keyword>
<keyword id="KW-0888">Threonine protease</keyword>
<evidence type="ECO:0000255" key="1">
    <source>
        <dbReference type="HAMAP-Rule" id="MF_00248"/>
    </source>
</evidence>
<protein>
    <recommendedName>
        <fullName evidence="1">ATP-dependent protease subunit HslV</fullName>
        <ecNumber evidence="1">3.4.25.2</ecNumber>
    </recommendedName>
</protein>
<comment type="function">
    <text evidence="1">Protease subunit of a proteasome-like degradation complex believed to be a general protein degrading machinery.</text>
</comment>
<comment type="catalytic activity">
    <reaction evidence="1">
        <text>ATP-dependent cleavage of peptide bonds with broad specificity.</text>
        <dbReference type="EC" id="3.4.25.2"/>
    </reaction>
</comment>
<comment type="activity regulation">
    <text evidence="1">Allosterically activated by HslU binding.</text>
</comment>
<comment type="subunit">
    <text evidence="1">A double ring-shaped homohexamer of HslV is capped on each side by a ring-shaped HslU homohexamer. The assembly of the HslU/HslV complex is dependent on binding of ATP.</text>
</comment>
<comment type="subcellular location">
    <subcellularLocation>
        <location evidence="1">Cytoplasm</location>
    </subcellularLocation>
</comment>
<comment type="similarity">
    <text evidence="1">Belongs to the peptidase T1B family. HslV subfamily.</text>
</comment>
<dbReference type="EC" id="3.4.25.2" evidence="1"/>
<dbReference type="EMBL" id="CP001217">
    <property type="protein sequence ID" value="ACJ07675.1"/>
    <property type="molecule type" value="Genomic_DNA"/>
</dbReference>
<dbReference type="SMR" id="B6JL97"/>
<dbReference type="KEGG" id="hpp:HPP12_0521"/>
<dbReference type="HOGENOM" id="CLU_093872_1_1_7"/>
<dbReference type="Proteomes" id="UP000008198">
    <property type="component" value="Chromosome"/>
</dbReference>
<dbReference type="GO" id="GO:0009376">
    <property type="term" value="C:HslUV protease complex"/>
    <property type="evidence" value="ECO:0007669"/>
    <property type="project" value="UniProtKB-UniRule"/>
</dbReference>
<dbReference type="GO" id="GO:0005839">
    <property type="term" value="C:proteasome core complex"/>
    <property type="evidence" value="ECO:0007669"/>
    <property type="project" value="InterPro"/>
</dbReference>
<dbReference type="GO" id="GO:0046872">
    <property type="term" value="F:metal ion binding"/>
    <property type="evidence" value="ECO:0007669"/>
    <property type="project" value="UniProtKB-KW"/>
</dbReference>
<dbReference type="GO" id="GO:0004298">
    <property type="term" value="F:threonine-type endopeptidase activity"/>
    <property type="evidence" value="ECO:0007669"/>
    <property type="project" value="UniProtKB-KW"/>
</dbReference>
<dbReference type="GO" id="GO:0051603">
    <property type="term" value="P:proteolysis involved in protein catabolic process"/>
    <property type="evidence" value="ECO:0007669"/>
    <property type="project" value="InterPro"/>
</dbReference>
<dbReference type="Gene3D" id="3.60.20.10">
    <property type="entry name" value="Glutamine Phosphoribosylpyrophosphate, subunit 1, domain 1"/>
    <property type="match status" value="1"/>
</dbReference>
<dbReference type="HAMAP" id="MF_00248">
    <property type="entry name" value="HslV"/>
    <property type="match status" value="1"/>
</dbReference>
<dbReference type="InterPro" id="IPR022281">
    <property type="entry name" value="ATP-dep_Prtase_HsIV_su"/>
</dbReference>
<dbReference type="InterPro" id="IPR029055">
    <property type="entry name" value="Ntn_hydrolases_N"/>
</dbReference>
<dbReference type="InterPro" id="IPR001353">
    <property type="entry name" value="Proteasome_sua/b"/>
</dbReference>
<dbReference type="InterPro" id="IPR023333">
    <property type="entry name" value="Proteasome_suB-type"/>
</dbReference>
<dbReference type="NCBIfam" id="TIGR03692">
    <property type="entry name" value="ATP_dep_HslV"/>
    <property type="match status" value="1"/>
</dbReference>
<dbReference type="NCBIfam" id="NF003964">
    <property type="entry name" value="PRK05456.1"/>
    <property type="match status" value="1"/>
</dbReference>
<dbReference type="PANTHER" id="PTHR32194:SF0">
    <property type="entry name" value="ATP-DEPENDENT PROTEASE SUBUNIT HSLV"/>
    <property type="match status" value="1"/>
</dbReference>
<dbReference type="PANTHER" id="PTHR32194">
    <property type="entry name" value="METALLOPROTEASE TLDD"/>
    <property type="match status" value="1"/>
</dbReference>
<dbReference type="Pfam" id="PF00227">
    <property type="entry name" value="Proteasome"/>
    <property type="match status" value="1"/>
</dbReference>
<dbReference type="SUPFAM" id="SSF56235">
    <property type="entry name" value="N-terminal nucleophile aminohydrolases (Ntn hydrolases)"/>
    <property type="match status" value="1"/>
</dbReference>
<dbReference type="PROSITE" id="PS51476">
    <property type="entry name" value="PROTEASOME_BETA_2"/>
    <property type="match status" value="1"/>
</dbReference>
<sequence length="180" mass="19832">MFEATTILGYRGEMGGKKFAFIGGDGQVTLGNCVVKANATKIRSLYHNQVLSGFAGSTADAFSLFDMFERILESKKGDLFKSVVDFSKEWRKDKYLRRLEAMMIVLNLDHIFILSGTGDVLEAEDNKIAAIGSGGNYALSAARALDHFAHLEPKKLVEESLKIAGDLCIYTNTNIKILEL</sequence>
<accession>B6JL97</accession>
<feature type="chain" id="PRO_1000100894" description="ATP-dependent protease subunit HslV">
    <location>
        <begin position="1"/>
        <end position="180"/>
    </location>
</feature>
<feature type="active site" evidence="1">
    <location>
        <position position="5"/>
    </location>
</feature>
<feature type="binding site" evidence="1">
    <location>
        <position position="165"/>
    </location>
    <ligand>
        <name>Na(+)</name>
        <dbReference type="ChEBI" id="CHEBI:29101"/>
    </ligand>
</feature>
<feature type="binding site" evidence="1">
    <location>
        <position position="168"/>
    </location>
    <ligand>
        <name>Na(+)</name>
        <dbReference type="ChEBI" id="CHEBI:29101"/>
    </ligand>
</feature>
<feature type="binding site" evidence="1">
    <location>
        <position position="171"/>
    </location>
    <ligand>
        <name>Na(+)</name>
        <dbReference type="ChEBI" id="CHEBI:29101"/>
    </ligand>
</feature>
<reference key="1">
    <citation type="submission" date="2008-10" db="EMBL/GenBank/DDBJ databases">
        <title>The complete genome sequence of Helicobacter pylori strain P12.</title>
        <authorList>
            <person name="Fischer W."/>
            <person name="Windhager L."/>
            <person name="Karnholz A."/>
            <person name="Zeiller M."/>
            <person name="Zimmer R."/>
            <person name="Haas R."/>
        </authorList>
    </citation>
    <scope>NUCLEOTIDE SEQUENCE [LARGE SCALE GENOMIC DNA]</scope>
    <source>
        <strain>P12</strain>
    </source>
</reference>
<gene>
    <name evidence="1" type="primary">hslV</name>
    <name type="ordered locus">HPP12_0521</name>
</gene>